<evidence type="ECO:0000255" key="1">
    <source>
        <dbReference type="HAMAP-Rule" id="MF_01207"/>
    </source>
</evidence>
<accession>Q1CDU3</accession>
<accession>D1Q1I6</accession>
<protein>
    <recommendedName>
        <fullName evidence="1">Protein-methionine-sulfoxide reductase heme-binding subunit MsrQ</fullName>
    </recommendedName>
    <alternativeName>
        <fullName evidence="1">Flavocytochrome MsrQ</fullName>
    </alternativeName>
</protein>
<proteinExistence type="inferred from homology"/>
<sequence length="206" mass="23851">MRLSLRHITWLKIAIWLAATLPLLWLVLSINLGGLSADPAKDIQHFTGRMALKLLLATLLVSPLARYSKQPLLLRCRRLLGLWCFAWGTLHLLSYSILELGLSNIGLLGHELINRPYLTLGIISWLVLLALALTSTRWAQRKMGARWQKLHNWVYVVAILAPIHYLWSVKTLSPWPIIYAVMAALLLLLRYKLLLPRYKKFRQWFR</sequence>
<reference key="1">
    <citation type="journal article" date="2006" name="J. Bacteriol.">
        <title>Complete genome sequence of Yersinia pestis strains Antiqua and Nepal516: evidence of gene reduction in an emerging pathogen.</title>
        <authorList>
            <person name="Chain P.S.G."/>
            <person name="Hu P."/>
            <person name="Malfatti S.A."/>
            <person name="Radnedge L."/>
            <person name="Larimer F."/>
            <person name="Vergez L.M."/>
            <person name="Worsham P."/>
            <person name="Chu M.C."/>
            <person name="Andersen G.L."/>
        </authorList>
    </citation>
    <scope>NUCLEOTIDE SEQUENCE [LARGE SCALE GENOMIC DNA]</scope>
    <source>
        <strain>Nepal516</strain>
    </source>
</reference>
<reference key="2">
    <citation type="submission" date="2009-04" db="EMBL/GenBank/DDBJ databases">
        <title>Yersinia pestis Nepal516A whole genome shotgun sequencing project.</title>
        <authorList>
            <person name="Plunkett G. III"/>
            <person name="Anderson B.D."/>
            <person name="Baumler D.J."/>
            <person name="Burland V."/>
            <person name="Cabot E.L."/>
            <person name="Glasner J.D."/>
            <person name="Mau B."/>
            <person name="Neeno-Eckwall E."/>
            <person name="Perna N.T."/>
            <person name="Munk A.C."/>
            <person name="Tapia R."/>
            <person name="Green L.D."/>
            <person name="Rogers Y.C."/>
            <person name="Detter J.C."/>
            <person name="Bruce D.C."/>
            <person name="Brettin T.S."/>
        </authorList>
    </citation>
    <scope>NUCLEOTIDE SEQUENCE [LARGE SCALE GENOMIC DNA]</scope>
    <source>
        <strain>Nepal516</strain>
    </source>
</reference>
<comment type="function">
    <text evidence="1">Part of the MsrPQ system that repairs oxidized periplasmic proteins containing methionine sulfoxide residues (Met-O), using respiratory chain electrons. Thus protects these proteins from oxidative-stress damage caused by reactive species of oxygen and chlorine generated by the host defense mechanisms. MsrPQ is essential for the maintenance of envelope integrity under bleach stress, rescuing a wide series of structurally unrelated periplasmic proteins from methionine oxidation. MsrQ provides electrons for reduction to the reductase catalytic subunit MsrP, using the quinone pool of the respiratory chain.</text>
</comment>
<comment type="cofactor">
    <cofactor evidence="1">
        <name>FMN</name>
        <dbReference type="ChEBI" id="CHEBI:58210"/>
    </cofactor>
    <text evidence="1">Binds 1 FMN per subunit.</text>
</comment>
<comment type="cofactor">
    <cofactor evidence="1">
        <name>heme b</name>
        <dbReference type="ChEBI" id="CHEBI:60344"/>
    </cofactor>
    <text evidence="1">Binds 1 heme b (iron(II)-protoporphyrin IX) group per subunit.</text>
</comment>
<comment type="subunit">
    <text evidence="1">Heterodimer of a catalytic subunit (MsrP) and a heme-binding subunit (MsrQ).</text>
</comment>
<comment type="subcellular location">
    <subcellularLocation>
        <location evidence="1">Cell inner membrane</location>
        <topology evidence="1">Multi-pass membrane protein</topology>
    </subcellularLocation>
</comment>
<comment type="similarity">
    <text evidence="1">Belongs to the MsrQ family.</text>
</comment>
<name>MSRQ_YERPN</name>
<gene>
    <name evidence="1" type="primary">msrQ</name>
    <name type="ordered locus">YPN_3510</name>
    <name type="ORF">YP516_3985</name>
</gene>
<feature type="chain" id="PRO_1000066196" description="Protein-methionine-sulfoxide reductase heme-binding subunit MsrQ">
    <location>
        <begin position="1"/>
        <end position="206"/>
    </location>
</feature>
<feature type="transmembrane region" description="Helical" evidence="1">
    <location>
        <begin position="13"/>
        <end position="33"/>
    </location>
</feature>
<feature type="transmembrane region" description="Helical" evidence="1">
    <location>
        <begin position="79"/>
        <end position="99"/>
    </location>
</feature>
<feature type="transmembrane region" description="Helical" evidence="1">
    <location>
        <begin position="116"/>
        <end position="136"/>
    </location>
</feature>
<feature type="transmembrane region" description="Helical" evidence="1">
    <location>
        <begin position="147"/>
        <end position="167"/>
    </location>
</feature>
<feature type="transmembrane region" description="Helical" evidence="1">
    <location>
        <begin position="169"/>
        <end position="189"/>
    </location>
</feature>
<dbReference type="EMBL" id="CP000305">
    <property type="protein sequence ID" value="ABG19837.1"/>
    <property type="molecule type" value="Genomic_DNA"/>
</dbReference>
<dbReference type="EMBL" id="ACNQ01000019">
    <property type="protein sequence ID" value="EEO74389.1"/>
    <property type="molecule type" value="Genomic_DNA"/>
</dbReference>
<dbReference type="RefSeq" id="WP_002210072.1">
    <property type="nucleotide sequence ID" value="NZ_ACNQ01000019.1"/>
</dbReference>
<dbReference type="SMR" id="Q1CDU3"/>
<dbReference type="GeneID" id="57975086"/>
<dbReference type="KEGG" id="ypn:YPN_3510"/>
<dbReference type="HOGENOM" id="CLU_080662_1_0_6"/>
<dbReference type="Proteomes" id="UP000008936">
    <property type="component" value="Chromosome"/>
</dbReference>
<dbReference type="GO" id="GO:0005886">
    <property type="term" value="C:plasma membrane"/>
    <property type="evidence" value="ECO:0007669"/>
    <property type="project" value="UniProtKB-SubCell"/>
</dbReference>
<dbReference type="GO" id="GO:0009055">
    <property type="term" value="F:electron transfer activity"/>
    <property type="evidence" value="ECO:0007669"/>
    <property type="project" value="UniProtKB-UniRule"/>
</dbReference>
<dbReference type="GO" id="GO:0010181">
    <property type="term" value="F:FMN binding"/>
    <property type="evidence" value="ECO:0007669"/>
    <property type="project" value="UniProtKB-UniRule"/>
</dbReference>
<dbReference type="GO" id="GO:0020037">
    <property type="term" value="F:heme binding"/>
    <property type="evidence" value="ECO:0007669"/>
    <property type="project" value="UniProtKB-UniRule"/>
</dbReference>
<dbReference type="GO" id="GO:0046872">
    <property type="term" value="F:metal ion binding"/>
    <property type="evidence" value="ECO:0007669"/>
    <property type="project" value="UniProtKB-KW"/>
</dbReference>
<dbReference type="GO" id="GO:0016679">
    <property type="term" value="F:oxidoreductase activity, acting on diphenols and related substances as donors"/>
    <property type="evidence" value="ECO:0007669"/>
    <property type="project" value="TreeGrafter"/>
</dbReference>
<dbReference type="GO" id="GO:0030091">
    <property type="term" value="P:protein repair"/>
    <property type="evidence" value="ECO:0007669"/>
    <property type="project" value="UniProtKB-UniRule"/>
</dbReference>
<dbReference type="HAMAP" id="MF_01207">
    <property type="entry name" value="MsrQ"/>
    <property type="match status" value="1"/>
</dbReference>
<dbReference type="InterPro" id="IPR013130">
    <property type="entry name" value="Fe3_Rdtase_TM_dom"/>
</dbReference>
<dbReference type="InterPro" id="IPR022837">
    <property type="entry name" value="MsrQ-like"/>
</dbReference>
<dbReference type="NCBIfam" id="NF003832">
    <property type="entry name" value="PRK05419.1-4"/>
    <property type="match status" value="1"/>
</dbReference>
<dbReference type="PANTHER" id="PTHR36964">
    <property type="entry name" value="PROTEIN-METHIONINE-SULFOXIDE REDUCTASE HEME-BINDING SUBUNIT MSRQ"/>
    <property type="match status" value="1"/>
</dbReference>
<dbReference type="PANTHER" id="PTHR36964:SF1">
    <property type="entry name" value="PROTEIN-METHIONINE-SULFOXIDE REDUCTASE HEME-BINDING SUBUNIT MSRQ"/>
    <property type="match status" value="1"/>
</dbReference>
<dbReference type="Pfam" id="PF01794">
    <property type="entry name" value="Ferric_reduct"/>
    <property type="match status" value="1"/>
</dbReference>
<keyword id="KW-0997">Cell inner membrane</keyword>
<keyword id="KW-1003">Cell membrane</keyword>
<keyword id="KW-0249">Electron transport</keyword>
<keyword id="KW-0285">Flavoprotein</keyword>
<keyword id="KW-0288">FMN</keyword>
<keyword id="KW-0349">Heme</keyword>
<keyword id="KW-0408">Iron</keyword>
<keyword id="KW-0472">Membrane</keyword>
<keyword id="KW-0479">Metal-binding</keyword>
<keyword id="KW-0812">Transmembrane</keyword>
<keyword id="KW-1133">Transmembrane helix</keyword>
<keyword id="KW-0813">Transport</keyword>
<organism>
    <name type="scientific">Yersinia pestis bv. Antiqua (strain Nepal516)</name>
    <dbReference type="NCBI Taxonomy" id="377628"/>
    <lineage>
        <taxon>Bacteria</taxon>
        <taxon>Pseudomonadati</taxon>
        <taxon>Pseudomonadota</taxon>
        <taxon>Gammaproteobacteria</taxon>
        <taxon>Enterobacterales</taxon>
        <taxon>Yersiniaceae</taxon>
        <taxon>Yersinia</taxon>
    </lineage>
</organism>